<accession>P09768</accession>
<protein>
    <recommendedName>
        <fullName>Thymidine kinase, cytosolic</fullName>
        <ecNumber evidence="1">2.7.1.21</ecNumber>
    </recommendedName>
</protein>
<organism>
    <name type="scientific">Cricetulus griseus</name>
    <name type="common">Chinese hamster</name>
    <name type="synonym">Cricetulus barabensis griseus</name>
    <dbReference type="NCBI Taxonomy" id="10029"/>
    <lineage>
        <taxon>Eukaryota</taxon>
        <taxon>Metazoa</taxon>
        <taxon>Chordata</taxon>
        <taxon>Craniata</taxon>
        <taxon>Vertebrata</taxon>
        <taxon>Euteleostomi</taxon>
        <taxon>Mammalia</taxon>
        <taxon>Eutheria</taxon>
        <taxon>Euarchontoglires</taxon>
        <taxon>Glires</taxon>
        <taxon>Rodentia</taxon>
        <taxon>Myomorpha</taxon>
        <taxon>Muroidea</taxon>
        <taxon>Cricetidae</taxon>
        <taxon>Cricetinae</taxon>
        <taxon>Cricetulus</taxon>
    </lineage>
</organism>
<evidence type="ECO:0000250" key="1">
    <source>
        <dbReference type="UniProtKB" id="P04183"/>
    </source>
</evidence>
<evidence type="ECO:0000255" key="2"/>
<evidence type="ECO:0000305" key="3"/>
<proteinExistence type="inferred from homology"/>
<reference key="1">
    <citation type="journal article" date="1986" name="Mol. Cell. Biol.">
        <title>Structure and expression of the Chinese hamster thymidine kinase gene.</title>
        <authorList>
            <person name="Lewis J.A."/>
        </authorList>
    </citation>
    <scope>NUCLEOTIDE SEQUENCE [GENOMIC DNA]</scope>
</reference>
<feature type="chain" id="PRO_0000174947" description="Thymidine kinase, cytosolic">
    <location>
        <begin position="1"/>
        <end position="234"/>
    </location>
</feature>
<feature type="short sequence motif" description="KEN box" evidence="1">
    <location>
        <begin position="203"/>
        <end position="205"/>
    </location>
</feature>
<feature type="active site" description="Proton acceptor" evidence="2">
    <location>
        <position position="98"/>
    </location>
</feature>
<feature type="binding site" evidence="3">
    <location>
        <begin position="26"/>
        <end position="33"/>
    </location>
    <ligand>
        <name>ATP</name>
        <dbReference type="ChEBI" id="CHEBI:30616"/>
    </ligand>
</feature>
<feature type="binding site" evidence="1">
    <location>
        <begin position="58"/>
        <end position="60"/>
    </location>
    <ligand>
        <name>ATP</name>
        <dbReference type="ChEBI" id="CHEBI:30616"/>
    </ligand>
</feature>
<feature type="binding site" evidence="1">
    <location>
        <begin position="97"/>
        <end position="100"/>
    </location>
    <ligand>
        <name>ATP</name>
        <dbReference type="ChEBI" id="CHEBI:30616"/>
    </ligand>
</feature>
<feature type="binding site" evidence="1">
    <location>
        <position position="128"/>
    </location>
    <ligand>
        <name>substrate</name>
    </ligand>
</feature>
<feature type="binding site" evidence="1">
    <location>
        <position position="153"/>
    </location>
    <ligand>
        <name>Zn(2+)</name>
        <dbReference type="ChEBI" id="CHEBI:29105"/>
    </ligand>
</feature>
<feature type="binding site" evidence="1">
    <location>
        <position position="156"/>
    </location>
    <ligand>
        <name>Zn(2+)</name>
        <dbReference type="ChEBI" id="CHEBI:29105"/>
    </ligand>
</feature>
<feature type="binding site" evidence="1">
    <location>
        <begin position="172"/>
        <end position="176"/>
    </location>
    <ligand>
        <name>substrate</name>
    </ligand>
</feature>
<feature type="binding site" evidence="1">
    <location>
        <position position="181"/>
    </location>
    <ligand>
        <name>substrate</name>
    </ligand>
</feature>
<feature type="binding site" evidence="1">
    <location>
        <position position="185"/>
    </location>
    <ligand>
        <name>Zn(2+)</name>
        <dbReference type="ChEBI" id="CHEBI:29105"/>
    </ligand>
</feature>
<feature type="binding site" evidence="1">
    <location>
        <position position="188"/>
    </location>
    <ligand>
        <name>Zn(2+)</name>
        <dbReference type="ChEBI" id="CHEBI:29105"/>
    </ligand>
</feature>
<feature type="modified residue" description="Phosphoserine" evidence="1">
    <location>
        <position position="13"/>
    </location>
</feature>
<comment type="function">
    <text evidence="1">Cell-cycle-regulated enzyme of importance in nucleotide metabolism. Catalyzes the first enzymatic step in the salvage pathway converting thymidine into thymidine monophosphate. Transcriptional regulation limits expression to the S phase of the cell cycle and transient expression coincides with the oscillation in the intracellular dTTP concentration.</text>
</comment>
<comment type="catalytic activity">
    <reaction evidence="1">
        <text>thymidine + ATP = dTMP + ADP + H(+)</text>
        <dbReference type="Rhea" id="RHEA:19129"/>
        <dbReference type="ChEBI" id="CHEBI:15378"/>
        <dbReference type="ChEBI" id="CHEBI:17748"/>
        <dbReference type="ChEBI" id="CHEBI:30616"/>
        <dbReference type="ChEBI" id="CHEBI:63528"/>
        <dbReference type="ChEBI" id="CHEBI:456216"/>
        <dbReference type="EC" id="2.7.1.21"/>
    </reaction>
    <physiologicalReaction direction="left-to-right" evidence="1">
        <dbReference type="Rhea" id="RHEA:19130"/>
    </physiologicalReaction>
</comment>
<comment type="subunit">
    <text evidence="1">Homotetramer. Tetramerization from dimerization is induced by ATP and increases catalytic efficiency due to a high affinity for thymidine. Tetramerization is inhibited by phosphorylation at Ser-13. Interacts (via the KEN box) with FZR1.</text>
</comment>
<comment type="subcellular location">
    <subcellularLocation>
        <location>Cytoplasm</location>
    </subcellularLocation>
</comment>
<comment type="domain">
    <text evidence="1">KEN box sequence located in the C-terminal region is required for its mitotic degradation by the APC/C-FZR1 ubiquitin ligase and interaction capability with FZR1.</text>
</comment>
<comment type="PTM">
    <text evidence="1">Phosphorylated on Ser-13 in mitosis. Phosphorylation of Ser-13 by CDK1 during mitosis reduces homotetramerization and catalytic efficiency when DNA replication is complete and intracellular TK1 is still present at a high level.</text>
</comment>
<comment type="PTM">
    <text evidence="1">Polyubiquitinated. Postmitosis, ubiquitination leads to proteasomal degradation. The KEN box sequence located at the C-terminal region targets for degradation by the anaphase promoting complex (APC/C) activated and rate-limited by FZR1.</text>
</comment>
<comment type="miscellaneous">
    <text>Two forms have been identified in animal cells, one in cytosol and one in mitochondria. Activity of the cytosolic enzyme is high in proliferating cells and peaks during the S-phase of the cell cycle; it is very low in resting cells.</text>
</comment>
<comment type="similarity">
    <text evidence="3">Belongs to the thymidine kinase family.</text>
</comment>
<sequence>MNYINLPTVLPGSPSKTRGQIQVILGPMFSGKSTELMRRVRRFQIAQNKCLVIKYAKDTRYSSSFSTHDRNTMDALPACLLRDVAQEALGAAVIGIDEGQFFPDIVEFCEVMANAGKTVIVAALDGTFQRKAFGSILNLVPLAESVVKLTAVCMECFREAAYTKRLGLEKEVEVIGGADKYHSVCRVCYFKKSSVQPAGPDNKENCPVLGQPGEASAVRKLFAPQQVLQHNSTN</sequence>
<dbReference type="EC" id="2.7.1.21" evidence="1"/>
<dbReference type="EMBL" id="L00369">
    <property type="protein sequence ID" value="AAA37022.1"/>
    <property type="molecule type" value="Genomic_DNA"/>
</dbReference>
<dbReference type="EMBL" id="L00364">
    <property type="protein sequence ID" value="AAA37022.1"/>
    <property type="status" value="JOINED"/>
    <property type="molecule type" value="Genomic_DNA"/>
</dbReference>
<dbReference type="EMBL" id="L00365">
    <property type="protein sequence ID" value="AAA37022.1"/>
    <property type="status" value="JOINED"/>
    <property type="molecule type" value="Genomic_DNA"/>
</dbReference>
<dbReference type="EMBL" id="L00366">
    <property type="protein sequence ID" value="AAA37022.1"/>
    <property type="status" value="JOINED"/>
    <property type="molecule type" value="Genomic_DNA"/>
</dbReference>
<dbReference type="EMBL" id="L00367">
    <property type="protein sequence ID" value="AAA37022.1"/>
    <property type="status" value="JOINED"/>
    <property type="molecule type" value="Genomic_DNA"/>
</dbReference>
<dbReference type="EMBL" id="L00368">
    <property type="protein sequence ID" value="AAA37022.1"/>
    <property type="status" value="JOINED"/>
    <property type="molecule type" value="Genomic_DNA"/>
</dbReference>
<dbReference type="PIR" id="A25243">
    <property type="entry name" value="A25243"/>
</dbReference>
<dbReference type="RefSeq" id="NP_001231423.1">
    <property type="nucleotide sequence ID" value="NM_001244494.2"/>
</dbReference>
<dbReference type="SMR" id="P09768"/>
<dbReference type="BindingDB" id="P09768"/>
<dbReference type="ChEMBL" id="CHEMBL3227916"/>
<dbReference type="PaxDb" id="10029-NP_001231423.1"/>
<dbReference type="Ensembl" id="ENSCGRT00001023730.1">
    <property type="protein sequence ID" value="ENSCGRP00001019486.1"/>
    <property type="gene ID" value="ENSCGRG00001018904.1"/>
</dbReference>
<dbReference type="GeneID" id="100689285"/>
<dbReference type="KEGG" id="cge:100689285"/>
<dbReference type="CTD" id="7083"/>
<dbReference type="eggNOG" id="KOG3125">
    <property type="taxonomic scope" value="Eukaryota"/>
</dbReference>
<dbReference type="GeneTree" id="ENSGT00390000011309"/>
<dbReference type="OMA" id="EAYEPRC"/>
<dbReference type="OrthoDB" id="439028at2759"/>
<dbReference type="Proteomes" id="UP000694386">
    <property type="component" value="Unplaced"/>
</dbReference>
<dbReference type="Proteomes" id="UP001108280">
    <property type="component" value="Chromosome 7"/>
</dbReference>
<dbReference type="GO" id="GO:0005737">
    <property type="term" value="C:cytoplasm"/>
    <property type="evidence" value="ECO:0007669"/>
    <property type="project" value="UniProtKB-SubCell"/>
</dbReference>
<dbReference type="GO" id="GO:0005634">
    <property type="term" value="C:nucleus"/>
    <property type="evidence" value="ECO:0007669"/>
    <property type="project" value="GOC"/>
</dbReference>
<dbReference type="GO" id="GO:0005524">
    <property type="term" value="F:ATP binding"/>
    <property type="evidence" value="ECO:0007669"/>
    <property type="project" value="UniProtKB-KW"/>
</dbReference>
<dbReference type="GO" id="GO:0042802">
    <property type="term" value="F:identical protein binding"/>
    <property type="evidence" value="ECO:0007669"/>
    <property type="project" value="Ensembl"/>
</dbReference>
<dbReference type="GO" id="GO:0004797">
    <property type="term" value="F:thymidine kinase activity"/>
    <property type="evidence" value="ECO:0000250"/>
    <property type="project" value="UniProtKB"/>
</dbReference>
<dbReference type="GO" id="GO:0008270">
    <property type="term" value="F:zinc ion binding"/>
    <property type="evidence" value="ECO:0000250"/>
    <property type="project" value="UniProtKB"/>
</dbReference>
<dbReference type="GO" id="GO:1904860">
    <property type="term" value="P:DNA synthesis involved in mitotic DNA replication"/>
    <property type="evidence" value="ECO:0007669"/>
    <property type="project" value="Ensembl"/>
</dbReference>
<dbReference type="GO" id="GO:0051289">
    <property type="term" value="P:protein homotetramerization"/>
    <property type="evidence" value="ECO:0000250"/>
    <property type="project" value="UniProtKB"/>
</dbReference>
<dbReference type="GO" id="GO:0046105">
    <property type="term" value="P:thymidine biosynthetic process"/>
    <property type="evidence" value="ECO:0007669"/>
    <property type="project" value="Ensembl"/>
</dbReference>
<dbReference type="GO" id="GO:0046104">
    <property type="term" value="P:thymidine metabolic process"/>
    <property type="evidence" value="ECO:0000250"/>
    <property type="project" value="UniProtKB"/>
</dbReference>
<dbReference type="FunFam" id="3.30.60.20:FF:000028">
    <property type="entry name" value="Thymidine kinase"/>
    <property type="match status" value="1"/>
</dbReference>
<dbReference type="FunFam" id="3.40.50.300:FF:000761">
    <property type="entry name" value="Thymidine kinase"/>
    <property type="match status" value="1"/>
</dbReference>
<dbReference type="Gene3D" id="3.30.60.20">
    <property type="match status" value="1"/>
</dbReference>
<dbReference type="Gene3D" id="3.40.50.300">
    <property type="entry name" value="P-loop containing nucleotide triphosphate hydrolases"/>
    <property type="match status" value="1"/>
</dbReference>
<dbReference type="InterPro" id="IPR027417">
    <property type="entry name" value="P-loop_NTPase"/>
</dbReference>
<dbReference type="InterPro" id="IPR001267">
    <property type="entry name" value="Thymidine_kinase"/>
</dbReference>
<dbReference type="InterPro" id="IPR020633">
    <property type="entry name" value="Thymidine_kinase_CS"/>
</dbReference>
<dbReference type="PANTHER" id="PTHR11441">
    <property type="entry name" value="THYMIDINE KINASE"/>
    <property type="match status" value="1"/>
</dbReference>
<dbReference type="PANTHER" id="PTHR11441:SF0">
    <property type="entry name" value="THYMIDINE KINASE, CYTOSOLIC"/>
    <property type="match status" value="1"/>
</dbReference>
<dbReference type="Pfam" id="PF00265">
    <property type="entry name" value="TK"/>
    <property type="match status" value="1"/>
</dbReference>
<dbReference type="SUPFAM" id="SSF57716">
    <property type="entry name" value="Glucocorticoid receptor-like (DNA-binding domain)"/>
    <property type="match status" value="1"/>
</dbReference>
<dbReference type="SUPFAM" id="SSF52540">
    <property type="entry name" value="P-loop containing nucleoside triphosphate hydrolases"/>
    <property type="match status" value="1"/>
</dbReference>
<dbReference type="PROSITE" id="PS00603">
    <property type="entry name" value="TK_CELLULAR_TYPE"/>
    <property type="match status" value="1"/>
</dbReference>
<keyword id="KW-0067">ATP-binding</keyword>
<keyword id="KW-0963">Cytoplasm</keyword>
<keyword id="KW-0237">DNA synthesis</keyword>
<keyword id="KW-0418">Kinase</keyword>
<keyword id="KW-0479">Metal-binding</keyword>
<keyword id="KW-0547">Nucleotide-binding</keyword>
<keyword id="KW-0597">Phosphoprotein</keyword>
<keyword id="KW-0808">Transferase</keyword>
<keyword id="KW-0832">Ubl conjugation</keyword>
<keyword id="KW-0862">Zinc</keyword>
<gene>
    <name type="primary">TK1</name>
</gene>
<name>KITH_CRIGR</name>